<organism>
    <name type="scientific">Homo sapiens</name>
    <name type="common">Human</name>
    <dbReference type="NCBI Taxonomy" id="9606"/>
    <lineage>
        <taxon>Eukaryota</taxon>
        <taxon>Metazoa</taxon>
        <taxon>Chordata</taxon>
        <taxon>Craniata</taxon>
        <taxon>Vertebrata</taxon>
        <taxon>Euteleostomi</taxon>
        <taxon>Mammalia</taxon>
        <taxon>Eutheria</taxon>
        <taxon>Euarchontoglires</taxon>
        <taxon>Primates</taxon>
        <taxon>Haplorrhini</taxon>
        <taxon>Catarrhini</taxon>
        <taxon>Hominidae</taxon>
        <taxon>Homo</taxon>
    </lineage>
</organism>
<feature type="chain" id="PRO_0000238610" description="Vesicle transport protein SFT2B">
    <location>
        <begin position="1"/>
        <end position="160"/>
    </location>
</feature>
<feature type="topological domain" description="Cytoplasmic" evidence="2">
    <location>
        <begin position="1"/>
        <end position="36"/>
    </location>
</feature>
<feature type="transmembrane region" description="Helical; Name=1" evidence="2">
    <location>
        <begin position="37"/>
        <end position="57"/>
    </location>
</feature>
<feature type="topological domain" description="Lumenal" evidence="2">
    <location>
        <begin position="58"/>
        <end position="63"/>
    </location>
</feature>
<feature type="transmembrane region" description="Helical; Name=2" evidence="2">
    <location>
        <begin position="64"/>
        <end position="84"/>
    </location>
</feature>
<feature type="topological domain" description="Cytoplasmic" evidence="2">
    <location>
        <begin position="85"/>
        <end position="98"/>
    </location>
</feature>
<feature type="transmembrane region" description="Helical; Name=3" evidence="2">
    <location>
        <begin position="99"/>
        <end position="119"/>
    </location>
</feature>
<feature type="topological domain" description="Lumenal" evidence="2">
    <location>
        <begin position="120"/>
        <end position="123"/>
    </location>
</feature>
<feature type="transmembrane region" description="Helical; Name=4" evidence="2">
    <location>
        <begin position="124"/>
        <end position="144"/>
    </location>
</feature>
<feature type="topological domain" description="Cytoplasmic" evidence="2">
    <location>
        <begin position="145"/>
        <end position="160"/>
    </location>
</feature>
<feature type="modified residue" description="N-acetylmethionine" evidence="9">
    <location>
        <position position="1"/>
    </location>
</feature>
<feature type="modified residue" description="Phosphoserine" evidence="7 8 10">
    <location>
        <position position="9"/>
    </location>
</feature>
<protein>
    <recommendedName>
        <fullName>Vesicle transport protein SFT2B</fullName>
    </recommendedName>
    <alternativeName>
        <fullName>SFT2 domain-containing protein 2</fullName>
    </alternativeName>
</protein>
<proteinExistence type="evidence at protein level"/>
<sequence length="160" mass="17779">MDKLKKVLSGQDTEDRSGLSEVVEASSLSWSTRIKGFIACFAIGILCSLLGTVLLWVPRKGLHLFAVFYTFGNIASIGSTIFLMGPVKQLKRMFEPTRLIATIMVLLCFALTLCSAFWWHNKGLALIFCILQSLALTWYSLSFIPFARDAVKKCFAVCLA</sequence>
<gene>
    <name evidence="4" type="primary">SFT2D2</name>
    <name type="ORF">UNQ512/PRO1027</name>
</gene>
<keyword id="KW-0007">Acetylation</keyword>
<keyword id="KW-0472">Membrane</keyword>
<keyword id="KW-0597">Phosphoprotein</keyword>
<keyword id="KW-0653">Protein transport</keyword>
<keyword id="KW-1267">Proteomics identification</keyword>
<keyword id="KW-1185">Reference proteome</keyword>
<keyword id="KW-0812">Transmembrane</keyword>
<keyword id="KW-1133">Transmembrane helix</keyword>
<keyword id="KW-0813">Transport</keyword>
<evidence type="ECO:0000250" key="1">
    <source>
        <dbReference type="UniProtKB" id="P38166"/>
    </source>
</evidence>
<evidence type="ECO:0000255" key="2"/>
<evidence type="ECO:0000305" key="3"/>
<evidence type="ECO:0000312" key="4">
    <source>
        <dbReference type="EMBL" id="AAH68098.1"/>
    </source>
</evidence>
<evidence type="ECO:0000312" key="5">
    <source>
        <dbReference type="EMBL" id="AAQ89038.1"/>
    </source>
</evidence>
<evidence type="ECO:0000312" key="6">
    <source>
        <dbReference type="EMBL" id="CAA22897.1"/>
    </source>
</evidence>
<evidence type="ECO:0007744" key="7">
    <source>
    </source>
</evidence>
<evidence type="ECO:0007744" key="8">
    <source>
    </source>
</evidence>
<evidence type="ECO:0007744" key="9">
    <source>
    </source>
</evidence>
<evidence type="ECO:0007744" key="10">
    <source>
    </source>
</evidence>
<reference evidence="6" key="1">
    <citation type="submission" date="1999-01" db="EMBL/GenBank/DDBJ databases">
        <authorList>
            <person name="Rhodes S."/>
        </authorList>
    </citation>
    <scope>NUCLEOTIDE SEQUENCE [LARGE SCALE MRNA]</scope>
</reference>
<reference key="2">
    <citation type="journal article" date="2004" name="Nat. Genet.">
        <title>Complete sequencing and characterization of 21,243 full-length human cDNAs.</title>
        <authorList>
            <person name="Ota T."/>
            <person name="Suzuki Y."/>
            <person name="Nishikawa T."/>
            <person name="Otsuki T."/>
            <person name="Sugiyama T."/>
            <person name="Irie R."/>
            <person name="Wakamatsu A."/>
            <person name="Hayashi K."/>
            <person name="Sato H."/>
            <person name="Nagai K."/>
            <person name="Kimura K."/>
            <person name="Makita H."/>
            <person name="Sekine M."/>
            <person name="Obayashi M."/>
            <person name="Nishi T."/>
            <person name="Shibahara T."/>
            <person name="Tanaka T."/>
            <person name="Ishii S."/>
            <person name="Yamamoto J."/>
            <person name="Saito K."/>
            <person name="Kawai Y."/>
            <person name="Isono Y."/>
            <person name="Nakamura Y."/>
            <person name="Nagahari K."/>
            <person name="Murakami K."/>
            <person name="Yasuda T."/>
            <person name="Iwayanagi T."/>
            <person name="Wagatsuma M."/>
            <person name="Shiratori A."/>
            <person name="Sudo H."/>
            <person name="Hosoiri T."/>
            <person name="Kaku Y."/>
            <person name="Kodaira H."/>
            <person name="Kondo H."/>
            <person name="Sugawara M."/>
            <person name="Takahashi M."/>
            <person name="Kanda K."/>
            <person name="Yokoi T."/>
            <person name="Furuya T."/>
            <person name="Kikkawa E."/>
            <person name="Omura Y."/>
            <person name="Abe K."/>
            <person name="Kamihara K."/>
            <person name="Katsuta N."/>
            <person name="Sato K."/>
            <person name="Tanikawa M."/>
            <person name="Yamazaki M."/>
            <person name="Ninomiya K."/>
            <person name="Ishibashi T."/>
            <person name="Yamashita H."/>
            <person name="Murakawa K."/>
            <person name="Fujimori K."/>
            <person name="Tanai H."/>
            <person name="Kimata M."/>
            <person name="Watanabe M."/>
            <person name="Hiraoka S."/>
            <person name="Chiba Y."/>
            <person name="Ishida S."/>
            <person name="Ono Y."/>
            <person name="Takiguchi S."/>
            <person name="Watanabe S."/>
            <person name="Yosida M."/>
            <person name="Hotuta T."/>
            <person name="Kusano J."/>
            <person name="Kanehori K."/>
            <person name="Takahashi-Fujii A."/>
            <person name="Hara H."/>
            <person name="Tanase T.-O."/>
            <person name="Nomura Y."/>
            <person name="Togiya S."/>
            <person name="Komai F."/>
            <person name="Hara R."/>
            <person name="Takeuchi K."/>
            <person name="Arita M."/>
            <person name="Imose N."/>
            <person name="Musashino K."/>
            <person name="Yuuki H."/>
            <person name="Oshima A."/>
            <person name="Sasaki N."/>
            <person name="Aotsuka S."/>
            <person name="Yoshikawa Y."/>
            <person name="Matsunawa H."/>
            <person name="Ichihara T."/>
            <person name="Shiohata N."/>
            <person name="Sano S."/>
            <person name="Moriya S."/>
            <person name="Momiyama H."/>
            <person name="Satoh N."/>
            <person name="Takami S."/>
            <person name="Terashima Y."/>
            <person name="Suzuki O."/>
            <person name="Nakagawa S."/>
            <person name="Senoh A."/>
            <person name="Mizoguchi H."/>
            <person name="Goto Y."/>
            <person name="Shimizu F."/>
            <person name="Wakebe H."/>
            <person name="Hishigaki H."/>
            <person name="Watanabe T."/>
            <person name="Sugiyama A."/>
            <person name="Takemoto M."/>
            <person name="Kawakami B."/>
            <person name="Yamazaki M."/>
            <person name="Watanabe K."/>
            <person name="Kumagai A."/>
            <person name="Itakura S."/>
            <person name="Fukuzumi Y."/>
            <person name="Fujimori Y."/>
            <person name="Komiyama M."/>
            <person name="Tashiro H."/>
            <person name="Tanigami A."/>
            <person name="Fujiwara T."/>
            <person name="Ono T."/>
            <person name="Yamada K."/>
            <person name="Fujii Y."/>
            <person name="Ozaki K."/>
            <person name="Hirao M."/>
            <person name="Ohmori Y."/>
            <person name="Kawabata A."/>
            <person name="Hikiji T."/>
            <person name="Kobatake N."/>
            <person name="Inagaki H."/>
            <person name="Ikema Y."/>
            <person name="Okamoto S."/>
            <person name="Okitani R."/>
            <person name="Kawakami T."/>
            <person name="Noguchi S."/>
            <person name="Itoh T."/>
            <person name="Shigeta K."/>
            <person name="Senba T."/>
            <person name="Matsumura K."/>
            <person name="Nakajima Y."/>
            <person name="Mizuno T."/>
            <person name="Morinaga M."/>
            <person name="Sasaki M."/>
            <person name="Togashi T."/>
            <person name="Oyama M."/>
            <person name="Hata H."/>
            <person name="Watanabe M."/>
            <person name="Komatsu T."/>
            <person name="Mizushima-Sugano J."/>
            <person name="Satoh T."/>
            <person name="Shirai Y."/>
            <person name="Takahashi Y."/>
            <person name="Nakagawa K."/>
            <person name="Okumura K."/>
            <person name="Nagase T."/>
            <person name="Nomura N."/>
            <person name="Kikuchi H."/>
            <person name="Masuho Y."/>
            <person name="Yamashita R."/>
            <person name="Nakai K."/>
            <person name="Yada T."/>
            <person name="Nakamura Y."/>
            <person name="Ohara O."/>
            <person name="Isogai T."/>
            <person name="Sugano S."/>
        </authorList>
    </citation>
    <scope>NUCLEOTIDE SEQUENCE [LARGE SCALE MRNA]</scope>
    <source>
        <tissue>Tongue</tissue>
    </source>
</reference>
<reference key="3">
    <citation type="journal article" date="2006" name="Nature">
        <title>The DNA sequence and biological annotation of human chromosome 1.</title>
        <authorList>
            <person name="Gregory S.G."/>
            <person name="Barlow K.F."/>
            <person name="McLay K.E."/>
            <person name="Kaul R."/>
            <person name="Swarbreck D."/>
            <person name="Dunham A."/>
            <person name="Scott C.E."/>
            <person name="Howe K.L."/>
            <person name="Woodfine K."/>
            <person name="Spencer C.C.A."/>
            <person name="Jones M.C."/>
            <person name="Gillson C."/>
            <person name="Searle S."/>
            <person name="Zhou Y."/>
            <person name="Kokocinski F."/>
            <person name="McDonald L."/>
            <person name="Evans R."/>
            <person name="Phillips K."/>
            <person name="Atkinson A."/>
            <person name="Cooper R."/>
            <person name="Jones C."/>
            <person name="Hall R.E."/>
            <person name="Andrews T.D."/>
            <person name="Lloyd C."/>
            <person name="Ainscough R."/>
            <person name="Almeida J.P."/>
            <person name="Ambrose K.D."/>
            <person name="Anderson F."/>
            <person name="Andrew R.W."/>
            <person name="Ashwell R.I.S."/>
            <person name="Aubin K."/>
            <person name="Babbage A.K."/>
            <person name="Bagguley C.L."/>
            <person name="Bailey J."/>
            <person name="Beasley H."/>
            <person name="Bethel G."/>
            <person name="Bird C.P."/>
            <person name="Bray-Allen S."/>
            <person name="Brown J.Y."/>
            <person name="Brown A.J."/>
            <person name="Buckley D."/>
            <person name="Burton J."/>
            <person name="Bye J."/>
            <person name="Carder C."/>
            <person name="Chapman J.C."/>
            <person name="Clark S.Y."/>
            <person name="Clarke G."/>
            <person name="Clee C."/>
            <person name="Cobley V."/>
            <person name="Collier R.E."/>
            <person name="Corby N."/>
            <person name="Coville G.J."/>
            <person name="Davies J."/>
            <person name="Deadman R."/>
            <person name="Dunn M."/>
            <person name="Earthrowl M."/>
            <person name="Ellington A.G."/>
            <person name="Errington H."/>
            <person name="Frankish A."/>
            <person name="Frankland J."/>
            <person name="French L."/>
            <person name="Garner P."/>
            <person name="Garnett J."/>
            <person name="Gay L."/>
            <person name="Ghori M.R.J."/>
            <person name="Gibson R."/>
            <person name="Gilby L.M."/>
            <person name="Gillett W."/>
            <person name="Glithero R.J."/>
            <person name="Grafham D.V."/>
            <person name="Griffiths C."/>
            <person name="Griffiths-Jones S."/>
            <person name="Grocock R."/>
            <person name="Hammond S."/>
            <person name="Harrison E.S.I."/>
            <person name="Hart E."/>
            <person name="Haugen E."/>
            <person name="Heath P.D."/>
            <person name="Holmes S."/>
            <person name="Holt K."/>
            <person name="Howden P.J."/>
            <person name="Hunt A.R."/>
            <person name="Hunt S.E."/>
            <person name="Hunter G."/>
            <person name="Isherwood J."/>
            <person name="James R."/>
            <person name="Johnson C."/>
            <person name="Johnson D."/>
            <person name="Joy A."/>
            <person name="Kay M."/>
            <person name="Kershaw J.K."/>
            <person name="Kibukawa M."/>
            <person name="Kimberley A.M."/>
            <person name="King A."/>
            <person name="Knights A.J."/>
            <person name="Lad H."/>
            <person name="Laird G."/>
            <person name="Lawlor S."/>
            <person name="Leongamornlert D.A."/>
            <person name="Lloyd D.M."/>
            <person name="Loveland J."/>
            <person name="Lovell J."/>
            <person name="Lush M.J."/>
            <person name="Lyne R."/>
            <person name="Martin S."/>
            <person name="Mashreghi-Mohammadi M."/>
            <person name="Matthews L."/>
            <person name="Matthews N.S.W."/>
            <person name="McLaren S."/>
            <person name="Milne S."/>
            <person name="Mistry S."/>
            <person name="Moore M.J.F."/>
            <person name="Nickerson T."/>
            <person name="O'Dell C.N."/>
            <person name="Oliver K."/>
            <person name="Palmeiri A."/>
            <person name="Palmer S.A."/>
            <person name="Parker A."/>
            <person name="Patel D."/>
            <person name="Pearce A.V."/>
            <person name="Peck A.I."/>
            <person name="Pelan S."/>
            <person name="Phelps K."/>
            <person name="Phillimore B.J."/>
            <person name="Plumb R."/>
            <person name="Rajan J."/>
            <person name="Raymond C."/>
            <person name="Rouse G."/>
            <person name="Saenphimmachak C."/>
            <person name="Sehra H.K."/>
            <person name="Sheridan E."/>
            <person name="Shownkeen R."/>
            <person name="Sims S."/>
            <person name="Skuce C.D."/>
            <person name="Smith M."/>
            <person name="Steward C."/>
            <person name="Subramanian S."/>
            <person name="Sycamore N."/>
            <person name="Tracey A."/>
            <person name="Tromans A."/>
            <person name="Van Helmond Z."/>
            <person name="Wall M."/>
            <person name="Wallis J.M."/>
            <person name="White S."/>
            <person name="Whitehead S.L."/>
            <person name="Wilkinson J.E."/>
            <person name="Willey D.L."/>
            <person name="Williams H."/>
            <person name="Wilming L."/>
            <person name="Wray P.W."/>
            <person name="Wu Z."/>
            <person name="Coulson A."/>
            <person name="Vaudin M."/>
            <person name="Sulston J.E."/>
            <person name="Durbin R.M."/>
            <person name="Hubbard T."/>
            <person name="Wooster R."/>
            <person name="Dunham I."/>
            <person name="Carter N.P."/>
            <person name="McVean G."/>
            <person name="Ross M.T."/>
            <person name="Harrow J."/>
            <person name="Olson M.V."/>
            <person name="Beck S."/>
            <person name="Rogers J."/>
            <person name="Bentley D.R."/>
        </authorList>
    </citation>
    <scope>NUCLEOTIDE SEQUENCE [LARGE SCALE GENOMIC DNA]</scope>
</reference>
<reference evidence="6" key="4">
    <citation type="submission" date="2005-07" db="EMBL/GenBank/DDBJ databases">
        <authorList>
            <person name="Mural R.J."/>
            <person name="Istrail S."/>
            <person name="Sutton G.G."/>
            <person name="Florea L."/>
            <person name="Halpern A.L."/>
            <person name="Mobarry C.M."/>
            <person name="Lippert R."/>
            <person name="Walenz B."/>
            <person name="Shatkay H."/>
            <person name="Dew I."/>
            <person name="Miller J.R."/>
            <person name="Flanigan M.J."/>
            <person name="Edwards N.J."/>
            <person name="Bolanos R."/>
            <person name="Fasulo D."/>
            <person name="Halldorsson B.V."/>
            <person name="Hannenhalli S."/>
            <person name="Turner R."/>
            <person name="Yooseph S."/>
            <person name="Lu F."/>
            <person name="Nusskern D.R."/>
            <person name="Shue B.C."/>
            <person name="Zheng X.H."/>
            <person name="Zhong F."/>
            <person name="Delcher A.L."/>
            <person name="Huson D.H."/>
            <person name="Kravitz S.A."/>
            <person name="Mouchard L."/>
            <person name="Reinert K."/>
            <person name="Remington K.A."/>
            <person name="Clark A.G."/>
            <person name="Waterman M.S."/>
            <person name="Eichler E.E."/>
            <person name="Adams M.D."/>
            <person name="Hunkapiller M.W."/>
            <person name="Myers E.W."/>
            <person name="Venter J.C."/>
        </authorList>
    </citation>
    <scope>NUCLEOTIDE SEQUENCE [LARGE SCALE GENOMIC DNA]</scope>
</reference>
<reference evidence="4" key="5">
    <citation type="journal article" date="2004" name="Genome Res.">
        <title>The status, quality, and expansion of the NIH full-length cDNA project: the Mammalian Gene Collection (MGC).</title>
        <authorList>
            <consortium name="The MGC Project Team"/>
        </authorList>
    </citation>
    <scope>NUCLEOTIDE SEQUENCE [LARGE SCALE MRNA]</scope>
    <source>
        <tissue evidence="4">Lymph</tissue>
    </source>
</reference>
<reference evidence="5" key="6">
    <citation type="journal article" date="2003" name="Genome Res.">
        <title>The secreted protein discovery initiative (SPDI), a large-scale effort to identify novel human secreted and transmembrane proteins: a bioinformatics assessment.</title>
        <authorList>
            <person name="Clark H.F."/>
            <person name="Gurney A.L."/>
            <person name="Abaya E."/>
            <person name="Baker K."/>
            <person name="Baldwin D.T."/>
            <person name="Brush J."/>
            <person name="Chen J."/>
            <person name="Chow B."/>
            <person name="Chui C."/>
            <person name="Crowley C."/>
            <person name="Currell B."/>
            <person name="Deuel B."/>
            <person name="Dowd P."/>
            <person name="Eaton D."/>
            <person name="Foster J.S."/>
            <person name="Grimaldi C."/>
            <person name="Gu Q."/>
            <person name="Hass P.E."/>
            <person name="Heldens S."/>
            <person name="Huang A."/>
            <person name="Kim H.S."/>
            <person name="Klimowski L."/>
            <person name="Jin Y."/>
            <person name="Johnson S."/>
            <person name="Lee J."/>
            <person name="Lewis L."/>
            <person name="Liao D."/>
            <person name="Mark M.R."/>
            <person name="Robbie E."/>
            <person name="Sanchez C."/>
            <person name="Schoenfeld J."/>
            <person name="Seshagiri S."/>
            <person name="Simmons L."/>
            <person name="Singh J."/>
            <person name="Smith V."/>
            <person name="Stinson J."/>
            <person name="Vagts A."/>
            <person name="Vandlen R.L."/>
            <person name="Watanabe C."/>
            <person name="Wieand D."/>
            <person name="Woods K."/>
            <person name="Xie M.-H."/>
            <person name="Yansura D.G."/>
            <person name="Yi S."/>
            <person name="Yu G."/>
            <person name="Yuan J."/>
            <person name="Zhang M."/>
            <person name="Zhang Z."/>
            <person name="Goddard A.D."/>
            <person name="Wood W.I."/>
            <person name="Godowski P.J."/>
            <person name="Gray A.M."/>
        </authorList>
    </citation>
    <scope>NUCLEOTIDE SEQUENCE [LARGE SCALE MRNA] OF 74-160</scope>
</reference>
<reference key="7">
    <citation type="journal article" date="2010" name="Sci. Signal.">
        <title>Quantitative phosphoproteomics reveals widespread full phosphorylation site occupancy during mitosis.</title>
        <authorList>
            <person name="Olsen J.V."/>
            <person name="Vermeulen M."/>
            <person name="Santamaria A."/>
            <person name="Kumar C."/>
            <person name="Miller M.L."/>
            <person name="Jensen L.J."/>
            <person name="Gnad F."/>
            <person name="Cox J."/>
            <person name="Jensen T.S."/>
            <person name="Nigg E.A."/>
            <person name="Brunak S."/>
            <person name="Mann M."/>
        </authorList>
    </citation>
    <scope>PHOSPHORYLATION [LARGE SCALE ANALYSIS] AT SER-9</scope>
    <scope>IDENTIFICATION BY MASS SPECTROMETRY [LARGE SCALE ANALYSIS]</scope>
    <source>
        <tissue>Cervix carcinoma</tissue>
    </source>
</reference>
<reference key="8">
    <citation type="journal article" date="2011" name="BMC Syst. Biol.">
        <title>Initial characterization of the human central proteome.</title>
        <authorList>
            <person name="Burkard T.R."/>
            <person name="Planyavsky M."/>
            <person name="Kaupe I."/>
            <person name="Breitwieser F.P."/>
            <person name="Buerckstuemmer T."/>
            <person name="Bennett K.L."/>
            <person name="Superti-Furga G."/>
            <person name="Colinge J."/>
        </authorList>
    </citation>
    <scope>IDENTIFICATION BY MASS SPECTROMETRY [LARGE SCALE ANALYSIS]</scope>
</reference>
<reference key="9">
    <citation type="journal article" date="2011" name="Sci. Signal.">
        <title>System-wide temporal characterization of the proteome and phosphoproteome of human embryonic stem cell differentiation.</title>
        <authorList>
            <person name="Rigbolt K.T."/>
            <person name="Prokhorova T.A."/>
            <person name="Akimov V."/>
            <person name="Henningsen J."/>
            <person name="Johansen P.T."/>
            <person name="Kratchmarova I."/>
            <person name="Kassem M."/>
            <person name="Mann M."/>
            <person name="Olsen J.V."/>
            <person name="Blagoev B."/>
        </authorList>
    </citation>
    <scope>PHOSPHORYLATION [LARGE SCALE ANALYSIS] AT SER-9</scope>
    <scope>IDENTIFICATION BY MASS SPECTROMETRY [LARGE SCALE ANALYSIS]</scope>
</reference>
<reference key="10">
    <citation type="journal article" date="2012" name="Proc. Natl. Acad. Sci. U.S.A.">
        <title>N-terminal acetylome analyses and functional insights of the N-terminal acetyltransferase NatB.</title>
        <authorList>
            <person name="Van Damme P."/>
            <person name="Lasa M."/>
            <person name="Polevoda B."/>
            <person name="Gazquez C."/>
            <person name="Elosegui-Artola A."/>
            <person name="Kim D.S."/>
            <person name="De Juan-Pardo E."/>
            <person name="Demeyer K."/>
            <person name="Hole K."/>
            <person name="Larrea E."/>
            <person name="Timmerman E."/>
            <person name="Prieto J."/>
            <person name="Arnesen T."/>
            <person name="Sherman F."/>
            <person name="Gevaert K."/>
            <person name="Aldabe R."/>
        </authorList>
    </citation>
    <scope>ACETYLATION [LARGE SCALE ANALYSIS] AT MET-1</scope>
    <scope>IDENTIFICATION BY MASS SPECTROMETRY [LARGE SCALE ANALYSIS]</scope>
</reference>
<reference key="11">
    <citation type="journal article" date="2013" name="J. Proteome Res.">
        <title>Toward a comprehensive characterization of a human cancer cell phosphoproteome.</title>
        <authorList>
            <person name="Zhou H."/>
            <person name="Di Palma S."/>
            <person name="Preisinger C."/>
            <person name="Peng M."/>
            <person name="Polat A.N."/>
            <person name="Heck A.J."/>
            <person name="Mohammed S."/>
        </authorList>
    </citation>
    <scope>PHOSPHORYLATION [LARGE SCALE ANALYSIS] AT SER-9</scope>
    <scope>IDENTIFICATION BY MASS SPECTROMETRY [LARGE SCALE ANALYSIS]</scope>
    <source>
        <tissue>Cervix carcinoma</tissue>
    </source>
</reference>
<reference key="12">
    <citation type="journal article" date="2015" name="Proteomics">
        <title>N-terminome analysis of the human mitochondrial proteome.</title>
        <authorList>
            <person name="Vaca Jacome A.S."/>
            <person name="Rabilloud T."/>
            <person name="Schaeffer-Reiss C."/>
            <person name="Rompais M."/>
            <person name="Ayoub D."/>
            <person name="Lane L."/>
            <person name="Bairoch A."/>
            <person name="Van Dorsselaer A."/>
            <person name="Carapito C."/>
        </authorList>
    </citation>
    <scope>IDENTIFICATION BY MASS SPECTROMETRY [LARGE SCALE ANALYSIS]</scope>
</reference>
<name>SFT2B_HUMAN</name>
<dbReference type="EMBL" id="AL035297">
    <property type="protein sequence ID" value="CAA22897.1"/>
    <property type="molecule type" value="mRNA"/>
</dbReference>
<dbReference type="EMBL" id="AK290325">
    <property type="protein sequence ID" value="BAF83014.1"/>
    <property type="molecule type" value="mRNA"/>
</dbReference>
<dbReference type="EMBL" id="AL009051">
    <property type="status" value="NOT_ANNOTATED_CDS"/>
    <property type="molecule type" value="Genomic_DNA"/>
</dbReference>
<dbReference type="EMBL" id="CH471067">
    <property type="protein sequence ID" value="EAW90822.1"/>
    <property type="molecule type" value="Genomic_DNA"/>
</dbReference>
<dbReference type="EMBL" id="BC068098">
    <property type="protein sequence ID" value="AAH68098.1"/>
    <property type="molecule type" value="mRNA"/>
</dbReference>
<dbReference type="EMBL" id="AY358675">
    <property type="protein sequence ID" value="AAQ89038.1"/>
    <property type="status" value="ALT_INIT"/>
    <property type="molecule type" value="mRNA"/>
</dbReference>
<dbReference type="CCDS" id="CCDS1271.1"/>
<dbReference type="RefSeq" id="NP_955376.1">
    <property type="nucleotide sequence ID" value="NM_199344.3"/>
</dbReference>
<dbReference type="BioGRID" id="131951">
    <property type="interactions" value="48"/>
</dbReference>
<dbReference type="FunCoup" id="O95562">
    <property type="interactions" value="131"/>
</dbReference>
<dbReference type="IntAct" id="O95562">
    <property type="interactions" value="28"/>
</dbReference>
<dbReference type="STRING" id="9606.ENSP00000271375"/>
<dbReference type="iPTMnet" id="O95562"/>
<dbReference type="PhosphoSitePlus" id="O95562"/>
<dbReference type="SwissPalm" id="O95562"/>
<dbReference type="BioMuta" id="SFT2D2"/>
<dbReference type="jPOST" id="O95562"/>
<dbReference type="MassIVE" id="O95562"/>
<dbReference type="PaxDb" id="9606-ENSP00000271375"/>
<dbReference type="PeptideAtlas" id="O95562"/>
<dbReference type="ProteomicsDB" id="50941"/>
<dbReference type="Pumba" id="O95562"/>
<dbReference type="Antibodypedia" id="50453">
    <property type="antibodies" value="154 antibodies from 22 providers"/>
</dbReference>
<dbReference type="DNASU" id="375035"/>
<dbReference type="Ensembl" id="ENST00000271375.7">
    <property type="protein sequence ID" value="ENSP00000271375.3"/>
    <property type="gene ID" value="ENSG00000213064.10"/>
</dbReference>
<dbReference type="GeneID" id="375035"/>
<dbReference type="KEGG" id="hsa:375035"/>
<dbReference type="MANE-Select" id="ENST00000271375.7">
    <property type="protein sequence ID" value="ENSP00000271375.3"/>
    <property type="RefSeq nucleotide sequence ID" value="NM_199344.3"/>
    <property type="RefSeq protein sequence ID" value="NP_955376.1"/>
</dbReference>
<dbReference type="UCSC" id="uc001gfk.3">
    <property type="organism name" value="human"/>
</dbReference>
<dbReference type="AGR" id="HGNC:25140"/>
<dbReference type="CTD" id="375035"/>
<dbReference type="DisGeNET" id="375035"/>
<dbReference type="GeneCards" id="SFT2D2"/>
<dbReference type="HGNC" id="HGNC:25140">
    <property type="gene designation" value="SFT2D2"/>
</dbReference>
<dbReference type="HPA" id="ENSG00000213064">
    <property type="expression patterns" value="Low tissue specificity"/>
</dbReference>
<dbReference type="neXtProt" id="NX_O95562"/>
<dbReference type="OpenTargets" id="ENSG00000213064"/>
<dbReference type="PharmGKB" id="PA142670928"/>
<dbReference type="VEuPathDB" id="HostDB:ENSG00000213064"/>
<dbReference type="eggNOG" id="KOG2887">
    <property type="taxonomic scope" value="Eukaryota"/>
</dbReference>
<dbReference type="GeneTree" id="ENSGT00390000018525"/>
<dbReference type="HOGENOM" id="CLU_099529_2_2_1"/>
<dbReference type="InParanoid" id="O95562"/>
<dbReference type="OMA" id="ISCCDTE"/>
<dbReference type="OrthoDB" id="73614at2759"/>
<dbReference type="PAN-GO" id="O95562">
    <property type="GO annotations" value="0 GO annotations based on evolutionary models"/>
</dbReference>
<dbReference type="PhylomeDB" id="O95562"/>
<dbReference type="TreeFam" id="TF315157"/>
<dbReference type="PathwayCommons" id="O95562"/>
<dbReference type="SignaLink" id="O95562"/>
<dbReference type="BioGRID-ORCS" id="375035">
    <property type="hits" value="14 hits in 1156 CRISPR screens"/>
</dbReference>
<dbReference type="ChiTaRS" id="SFT2D2">
    <property type="organism name" value="human"/>
</dbReference>
<dbReference type="GenomeRNAi" id="375035"/>
<dbReference type="Pharos" id="O95562">
    <property type="development level" value="Tdark"/>
</dbReference>
<dbReference type="PRO" id="PR:O95562"/>
<dbReference type="Proteomes" id="UP000005640">
    <property type="component" value="Chromosome 1"/>
</dbReference>
<dbReference type="RNAct" id="O95562">
    <property type="molecule type" value="protein"/>
</dbReference>
<dbReference type="Bgee" id="ENSG00000213064">
    <property type="expression patterns" value="Expressed in sperm and 197 other cell types or tissues"/>
</dbReference>
<dbReference type="ExpressionAtlas" id="O95562">
    <property type="expression patterns" value="baseline and differential"/>
</dbReference>
<dbReference type="GO" id="GO:0005737">
    <property type="term" value="C:cytoplasm"/>
    <property type="evidence" value="ECO:0007669"/>
    <property type="project" value="UniProtKB-ARBA"/>
</dbReference>
<dbReference type="GO" id="GO:0012505">
    <property type="term" value="C:endomembrane system"/>
    <property type="evidence" value="ECO:0007669"/>
    <property type="project" value="UniProtKB-ARBA"/>
</dbReference>
<dbReference type="GO" id="GO:0070062">
    <property type="term" value="C:extracellular exosome"/>
    <property type="evidence" value="ECO:0007005"/>
    <property type="project" value="UniProtKB"/>
</dbReference>
<dbReference type="GO" id="GO:0043231">
    <property type="term" value="C:intracellular membrane-bounded organelle"/>
    <property type="evidence" value="ECO:0007669"/>
    <property type="project" value="UniProtKB-ARBA"/>
</dbReference>
<dbReference type="GO" id="GO:0016020">
    <property type="term" value="C:membrane"/>
    <property type="evidence" value="ECO:0007669"/>
    <property type="project" value="UniProtKB-SubCell"/>
</dbReference>
<dbReference type="GO" id="GO:0015031">
    <property type="term" value="P:protein transport"/>
    <property type="evidence" value="ECO:0007669"/>
    <property type="project" value="UniProtKB-KW"/>
</dbReference>
<dbReference type="GO" id="GO:0016192">
    <property type="term" value="P:vesicle-mediated transport"/>
    <property type="evidence" value="ECO:0007669"/>
    <property type="project" value="InterPro"/>
</dbReference>
<dbReference type="InterPro" id="IPR007305">
    <property type="entry name" value="Vesicle_transpt_Got1/SFT2"/>
</dbReference>
<dbReference type="InterPro" id="IPR011691">
    <property type="entry name" value="Vesicle_transpt_SFT2"/>
</dbReference>
<dbReference type="PANTHER" id="PTHR23137:SF1">
    <property type="entry name" value="VESICLE TRANSPORT PROTEIN SFT2B"/>
    <property type="match status" value="1"/>
</dbReference>
<dbReference type="PANTHER" id="PTHR23137">
    <property type="entry name" value="VESICLE TRANSPORT PROTEIN-RELATED"/>
    <property type="match status" value="1"/>
</dbReference>
<dbReference type="Pfam" id="PF04178">
    <property type="entry name" value="Got1"/>
    <property type="match status" value="1"/>
</dbReference>
<accession>O95562</accession>
<accession>A8K2R0</accession>
<accession>Q6UWR8</accession>
<comment type="function">
    <text evidence="1">May be involved in fusion of retrograde transport vesicles derived from an endocytic compartment with the Golgi complex.</text>
</comment>
<comment type="interaction">
    <interactant intactId="EBI-4402330">
        <id>O95562</id>
    </interactant>
    <interactant intactId="EBI-13059134">
        <id>Q13520</id>
        <label>AQP6</label>
    </interactant>
    <organismsDiffer>false</organismsDiffer>
    <experiments>3</experiments>
</comment>
<comment type="interaction">
    <interactant intactId="EBI-4402330">
        <id>O95562</id>
    </interactant>
    <interactant intactId="EBI-2606700">
        <id>P18859</id>
        <label>ATP5PF</label>
    </interactant>
    <organismsDiffer>false</organismsDiffer>
    <experiments>3</experiments>
</comment>
<comment type="interaction">
    <interactant intactId="EBI-4402330">
        <id>O95562</id>
    </interactant>
    <interactant intactId="EBI-752094">
        <id>Q12982</id>
        <label>BNIP2</label>
    </interactant>
    <organismsDiffer>false</organismsDiffer>
    <experiments>3</experiments>
</comment>
<comment type="interaction">
    <interactant intactId="EBI-4402330">
        <id>O95562</id>
    </interactant>
    <interactant intactId="EBI-18535450">
        <id>Q9GZR5</id>
        <label>ELOVL4</label>
    </interactant>
    <organismsDiffer>false</organismsDiffer>
    <experiments>3</experiments>
</comment>
<comment type="interaction">
    <interactant intactId="EBI-4402330">
        <id>O95562</id>
    </interactant>
    <interactant intactId="EBI-13345167">
        <id>Q8TDT2</id>
        <label>GPR152</label>
    </interactant>
    <organismsDiffer>false</organismsDiffer>
    <experiments>3</experiments>
</comment>
<comment type="interaction">
    <interactant intactId="EBI-4402330">
        <id>O95562</id>
    </interactant>
    <interactant intactId="EBI-11427100">
        <id>P31937</id>
        <label>HIBADH</label>
    </interactant>
    <organismsDiffer>false</organismsDiffer>
    <experiments>3</experiments>
</comment>
<comment type="interaction">
    <interactant intactId="EBI-4402330">
        <id>O95562</id>
    </interactant>
    <interactant intactId="EBI-1052304">
        <id>Q8NBQ5</id>
        <label>HSD17B11</label>
    </interactant>
    <organismsDiffer>false</organismsDiffer>
    <experiments>3</experiments>
</comment>
<comment type="interaction">
    <interactant intactId="EBI-4402330">
        <id>O95562</id>
    </interactant>
    <interactant intactId="EBI-18053395">
        <id>Q7Z5P4</id>
        <label>HSD17B13</label>
    </interactant>
    <organismsDiffer>false</organismsDiffer>
    <experiments>3</experiments>
</comment>
<comment type="interaction">
    <interactant intactId="EBI-4402330">
        <id>O95562</id>
    </interactant>
    <interactant intactId="EBI-3905457">
        <id>P38484</id>
        <label>IFNGR2</label>
    </interactant>
    <organismsDiffer>false</organismsDiffer>
    <experiments>3</experiments>
</comment>
<comment type="interaction">
    <interactant intactId="EBI-4402330">
        <id>O95562</id>
    </interactant>
    <interactant intactId="EBI-749162">
        <id>Q9BT40</id>
        <label>INPP5K</label>
    </interactant>
    <organismsDiffer>false</organismsDiffer>
    <experiments>3</experiments>
</comment>
<comment type="interaction">
    <interactant intactId="EBI-4402330">
        <id>O95562</id>
    </interactant>
    <interactant intactId="EBI-2558739">
        <id>Q70IA6</id>
        <label>MOB2</label>
    </interactant>
    <organismsDiffer>false</organismsDiffer>
    <experiments>3</experiments>
</comment>
<comment type="interaction">
    <interactant intactId="EBI-4402330">
        <id>O95562</id>
    </interactant>
    <interactant intactId="EBI-11978907">
        <id>Q9ULP0-2</id>
        <label>NDRG4</label>
    </interactant>
    <organismsDiffer>false</organismsDiffer>
    <experiments>3</experiments>
</comment>
<comment type="interaction">
    <interactant intactId="EBI-4402330">
        <id>O95562</id>
    </interactant>
    <interactant intactId="EBI-741171">
        <id>Q96AL5</id>
        <label>PBX3</label>
    </interactant>
    <organismsDiffer>false</organismsDiffer>
    <experiments>3</experiments>
</comment>
<comment type="interaction">
    <interactant intactId="EBI-4402330">
        <id>O95562</id>
    </interactant>
    <interactant intactId="EBI-2115275">
        <id>Q99541</id>
        <label>PLIN2</label>
    </interactant>
    <organismsDiffer>false</organismsDiffer>
    <experiments>3</experiments>
</comment>
<comment type="interaction">
    <interactant intactId="EBI-4402330">
        <id>O95562</id>
    </interactant>
    <interactant intactId="EBI-725795">
        <id>O60664</id>
        <label>PLIN3</label>
    </interactant>
    <organismsDiffer>false</organismsDiffer>
    <experiments>3</experiments>
</comment>
<comment type="interaction">
    <interactant intactId="EBI-4402330">
        <id>O95562</id>
    </interactant>
    <interactant intactId="EBI-11337973">
        <id>Q9BRK0</id>
        <label>REEP2</label>
    </interactant>
    <organismsDiffer>false</organismsDiffer>
    <experiments>3</experiments>
</comment>
<comment type="interaction">
    <interactant intactId="EBI-4402330">
        <id>O95562</id>
    </interactant>
    <interactant intactId="EBI-7545592">
        <id>Q9H6H4</id>
        <label>REEP4</label>
    </interactant>
    <organismsDiffer>false</organismsDiffer>
    <experiments>3</experiments>
</comment>
<comment type="interaction">
    <interactant intactId="EBI-4402330">
        <id>O95562</id>
    </interactant>
    <interactant intactId="EBI-3923031">
        <id>Q14973</id>
        <label>SLC10A1</label>
    </interactant>
    <organismsDiffer>false</organismsDiffer>
    <experiments>3</experiments>
</comment>
<comment type="interaction">
    <interactant intactId="EBI-4402330">
        <id>O95562</id>
    </interactant>
    <interactant intactId="EBI-18159983">
        <id>Q3KNW5</id>
        <label>SLC10A6</label>
    </interactant>
    <organismsDiffer>false</organismsDiffer>
    <experiments>3</experiments>
</comment>
<comment type="interaction">
    <interactant intactId="EBI-4402330">
        <id>O95562</id>
    </interactant>
    <interactant intactId="EBI-10262251">
        <id>Q8IWU4</id>
        <label>SLC30A8</label>
    </interactant>
    <organismsDiffer>false</organismsDiffer>
    <experiments>3</experiments>
</comment>
<comment type="interaction">
    <interactant intactId="EBI-4402330">
        <id>O95562</id>
    </interactant>
    <interactant intactId="EBI-1211440">
        <id>P27105</id>
        <label>STOM</label>
    </interactant>
    <organismsDiffer>false</organismsDiffer>
    <experiments>3</experiments>
</comment>
<comment type="interaction">
    <interactant intactId="EBI-4402330">
        <id>O95562</id>
    </interactant>
    <interactant intactId="EBI-17933167">
        <id>Q9NYW4</id>
        <label>TAS2R5</label>
    </interactant>
    <organismsDiffer>false</organismsDiffer>
    <experiments>3</experiments>
</comment>
<comment type="interaction">
    <interactant intactId="EBI-4402330">
        <id>O95562</id>
    </interactant>
    <interactant intactId="EBI-861737">
        <id>O43615</id>
        <label>TIMM44</label>
    </interactant>
    <organismsDiffer>false</organismsDiffer>
    <experiments>3</experiments>
</comment>
<comment type="interaction">
    <interactant intactId="EBI-4402330">
        <id>O95562</id>
    </interactant>
    <interactant intactId="EBI-13342951">
        <id>Q96AN5</id>
        <label>TMEM143</label>
    </interactant>
    <organismsDiffer>false</organismsDiffer>
    <experiments>3</experiments>
</comment>
<comment type="interaction">
    <interactant intactId="EBI-4402330">
        <id>O95562</id>
    </interactant>
    <interactant intactId="EBI-8638294">
        <id>Q9NUH8</id>
        <label>TMEM14B</label>
    </interactant>
    <organismsDiffer>false</organismsDiffer>
    <experiments>3</experiments>
</comment>
<comment type="interaction">
    <interactant intactId="EBI-4402330">
        <id>O95562</id>
    </interactant>
    <interactant intactId="EBI-726044">
        <id>Q9NW97</id>
        <label>TMEM51</label>
    </interactant>
    <organismsDiffer>false</organismsDiffer>
    <experiments>3</experiments>
</comment>
<comment type="subcellular location">
    <subcellularLocation>
        <location evidence="2">Membrane</location>
        <topology evidence="2">Multi-pass membrane protein</topology>
    </subcellularLocation>
</comment>
<comment type="similarity">
    <text evidence="2">Belongs to the SFT2 family.</text>
</comment>
<comment type="sequence caution" evidence="3">
    <conflict type="erroneous initiation">
        <sequence resource="EMBL-CDS" id="AAQ89038"/>
    </conflict>
</comment>